<reference key="1">
    <citation type="submission" date="2007-06" db="EMBL/GenBank/DDBJ databases">
        <title>Complete sequence of Methanococcus vannielii SB.</title>
        <authorList>
            <consortium name="US DOE Joint Genome Institute"/>
            <person name="Copeland A."/>
            <person name="Lucas S."/>
            <person name="Lapidus A."/>
            <person name="Barry K."/>
            <person name="Glavina del Rio T."/>
            <person name="Dalin E."/>
            <person name="Tice H."/>
            <person name="Pitluck S."/>
            <person name="Chain P."/>
            <person name="Malfatti S."/>
            <person name="Shin M."/>
            <person name="Vergez L."/>
            <person name="Schmutz J."/>
            <person name="Larimer F."/>
            <person name="Land M."/>
            <person name="Hauser L."/>
            <person name="Kyrpides N."/>
            <person name="Anderson I."/>
            <person name="Sieprawska-Lupa M."/>
            <person name="Whitman W.B."/>
            <person name="Richardson P."/>
        </authorList>
    </citation>
    <scope>NUCLEOTIDE SEQUENCE [LARGE SCALE GENOMIC DNA]</scope>
    <source>
        <strain>ATCC 35089 / DSM 1224 / JCM 13029 / OCM 148 / SB</strain>
    </source>
</reference>
<name>MOAA_METVS</name>
<evidence type="ECO:0000255" key="1">
    <source>
        <dbReference type="HAMAP-Rule" id="MF_01225"/>
    </source>
</evidence>
<evidence type="ECO:0000255" key="2">
    <source>
        <dbReference type="PROSITE-ProRule" id="PRU01266"/>
    </source>
</evidence>
<comment type="function">
    <text evidence="1">Catalyzes the cyclization of GTP to (8S)-3',8-cyclo-7,8-dihydroguanosine 5'-triphosphate.</text>
</comment>
<comment type="catalytic activity">
    <reaction evidence="1">
        <text>GTP + AH2 + S-adenosyl-L-methionine = (8S)-3',8-cyclo-7,8-dihydroguanosine 5'-triphosphate + 5'-deoxyadenosine + L-methionine + A + H(+)</text>
        <dbReference type="Rhea" id="RHEA:49576"/>
        <dbReference type="ChEBI" id="CHEBI:13193"/>
        <dbReference type="ChEBI" id="CHEBI:15378"/>
        <dbReference type="ChEBI" id="CHEBI:17319"/>
        <dbReference type="ChEBI" id="CHEBI:17499"/>
        <dbReference type="ChEBI" id="CHEBI:37565"/>
        <dbReference type="ChEBI" id="CHEBI:57844"/>
        <dbReference type="ChEBI" id="CHEBI:59789"/>
        <dbReference type="ChEBI" id="CHEBI:131766"/>
        <dbReference type="EC" id="4.1.99.22"/>
    </reaction>
</comment>
<comment type="cofactor">
    <cofactor evidence="1">
        <name>[4Fe-4S] cluster</name>
        <dbReference type="ChEBI" id="CHEBI:49883"/>
    </cofactor>
    <text evidence="1">Binds 2 [4Fe-4S] clusters. Binds 1 [4Fe-4S] cluster coordinated with 3 cysteines and an exchangeable S-adenosyl-L-methionine and 1 [4Fe-4S] cluster coordinated with 3 cysteines and the GTP-derived substrate.</text>
</comment>
<comment type="pathway">
    <text evidence="1">Cofactor biosynthesis; molybdopterin biosynthesis.</text>
</comment>
<comment type="similarity">
    <text evidence="1">Belongs to the radical SAM superfamily. MoaA family.</text>
</comment>
<gene>
    <name evidence="1" type="primary">moaA</name>
    <name type="ordered locus">Mevan_1445</name>
</gene>
<organism>
    <name type="scientific">Methanococcus vannielii (strain ATCC 35089 / DSM 1224 / JCM 13029 / OCM 148 / SB)</name>
    <dbReference type="NCBI Taxonomy" id="406327"/>
    <lineage>
        <taxon>Archaea</taxon>
        <taxon>Methanobacteriati</taxon>
        <taxon>Methanobacteriota</taxon>
        <taxon>Methanomada group</taxon>
        <taxon>Methanococci</taxon>
        <taxon>Methanococcales</taxon>
        <taxon>Methanococcaceae</taxon>
        <taxon>Methanococcus</taxon>
    </lineage>
</organism>
<keyword id="KW-0004">4Fe-4S</keyword>
<keyword id="KW-0342">GTP-binding</keyword>
<keyword id="KW-0408">Iron</keyword>
<keyword id="KW-0411">Iron-sulfur</keyword>
<keyword id="KW-0456">Lyase</keyword>
<keyword id="KW-0479">Metal-binding</keyword>
<keyword id="KW-0501">Molybdenum cofactor biosynthesis</keyword>
<keyword id="KW-0547">Nucleotide-binding</keyword>
<keyword id="KW-0949">S-adenosyl-L-methionine</keyword>
<sequence length="297" mass="34090">MKDEFGREIRSFRLSITPECNLKCFYCHREGRTEENGKLMSPDEIGKIVSASLEFGVRKIKISGGEPLVRKDLPKIIQNIKNDQIKDISLTTNGILLEKCAEDLKKAGLNRVNVSLDTLNPKKYKEITGGDVEKVKRGIEKAIFLGLTPLKVNFLAMDITLNDLSEVMDYCKKVGAILQIIEFIPVDPNLKHHHIDITPIEEEIAKKSEKVVTRKFMQNRKKYILDGLEIEFVRPMDNTEFCGHCTRIRLTYDGFLKPCLLRDDNLVDVVTPLRNEESIRSYFIKCIKNREPFCKAE</sequence>
<proteinExistence type="inferred from homology"/>
<accession>A6US67</accession>
<protein>
    <recommendedName>
        <fullName evidence="1">Probable GTP 3',8-cyclase</fullName>
        <ecNumber evidence="1">4.1.99.22</ecNumber>
    </recommendedName>
    <alternativeName>
        <fullName evidence="1">Molybdenum cofactor biosynthesis protein A</fullName>
    </alternativeName>
</protein>
<feature type="chain" id="PRO_1000085701" description="Probable GTP 3',8-cyclase">
    <location>
        <begin position="1"/>
        <end position="297"/>
    </location>
</feature>
<feature type="domain" description="Radical SAM core" evidence="2">
    <location>
        <begin position="4"/>
        <end position="220"/>
    </location>
</feature>
<feature type="binding site" evidence="1">
    <location>
        <position position="13"/>
    </location>
    <ligand>
        <name>GTP</name>
        <dbReference type="ChEBI" id="CHEBI:37565"/>
    </ligand>
</feature>
<feature type="binding site" evidence="1">
    <location>
        <position position="20"/>
    </location>
    <ligand>
        <name>[4Fe-4S] cluster</name>
        <dbReference type="ChEBI" id="CHEBI:49883"/>
        <label>1</label>
        <note>4Fe-4S-S-AdoMet</note>
    </ligand>
</feature>
<feature type="binding site" evidence="1">
    <location>
        <position position="24"/>
    </location>
    <ligand>
        <name>[4Fe-4S] cluster</name>
        <dbReference type="ChEBI" id="CHEBI:49883"/>
        <label>1</label>
        <note>4Fe-4S-S-AdoMet</note>
    </ligand>
</feature>
<feature type="binding site" evidence="1">
    <location>
        <position position="26"/>
    </location>
    <ligand>
        <name>S-adenosyl-L-methionine</name>
        <dbReference type="ChEBI" id="CHEBI:59789"/>
    </ligand>
</feature>
<feature type="binding site" evidence="1">
    <location>
        <position position="27"/>
    </location>
    <ligand>
        <name>[4Fe-4S] cluster</name>
        <dbReference type="ChEBI" id="CHEBI:49883"/>
        <label>1</label>
        <note>4Fe-4S-S-AdoMet</note>
    </ligand>
</feature>
<feature type="binding site" evidence="1">
    <location>
        <position position="61"/>
    </location>
    <ligand>
        <name>GTP</name>
        <dbReference type="ChEBI" id="CHEBI:37565"/>
    </ligand>
</feature>
<feature type="binding site" evidence="1">
    <location>
        <position position="65"/>
    </location>
    <ligand>
        <name>S-adenosyl-L-methionine</name>
        <dbReference type="ChEBI" id="CHEBI:59789"/>
    </ligand>
</feature>
<feature type="binding site" evidence="1">
    <location>
        <position position="91"/>
    </location>
    <ligand>
        <name>GTP</name>
        <dbReference type="ChEBI" id="CHEBI:37565"/>
    </ligand>
</feature>
<feature type="binding site" evidence="1">
    <location>
        <position position="115"/>
    </location>
    <ligand>
        <name>S-adenosyl-L-methionine</name>
        <dbReference type="ChEBI" id="CHEBI:59789"/>
    </ligand>
</feature>
<feature type="binding site" evidence="1">
    <location>
        <position position="151"/>
    </location>
    <ligand>
        <name>GTP</name>
        <dbReference type="ChEBI" id="CHEBI:37565"/>
    </ligand>
</feature>
<feature type="binding site" evidence="1">
    <location>
        <position position="242"/>
    </location>
    <ligand>
        <name>[4Fe-4S] cluster</name>
        <dbReference type="ChEBI" id="CHEBI:49883"/>
        <label>2</label>
        <note>4Fe-4S-substrate</note>
    </ligand>
</feature>
<feature type="binding site" evidence="1">
    <location>
        <position position="245"/>
    </location>
    <ligand>
        <name>[4Fe-4S] cluster</name>
        <dbReference type="ChEBI" id="CHEBI:49883"/>
        <label>2</label>
        <note>4Fe-4S-substrate</note>
    </ligand>
</feature>
<feature type="binding site" evidence="1">
    <location>
        <begin position="247"/>
        <end position="249"/>
    </location>
    <ligand>
        <name>GTP</name>
        <dbReference type="ChEBI" id="CHEBI:37565"/>
    </ligand>
</feature>
<feature type="binding site" evidence="1">
    <location>
        <position position="259"/>
    </location>
    <ligand>
        <name>[4Fe-4S] cluster</name>
        <dbReference type="ChEBI" id="CHEBI:49883"/>
        <label>2</label>
        <note>4Fe-4S-substrate</note>
    </ligand>
</feature>
<dbReference type="EC" id="4.1.99.22" evidence="1"/>
<dbReference type="EMBL" id="CP000742">
    <property type="protein sequence ID" value="ABR55339.1"/>
    <property type="molecule type" value="Genomic_DNA"/>
</dbReference>
<dbReference type="RefSeq" id="WP_012066253.1">
    <property type="nucleotide sequence ID" value="NC_009634.1"/>
</dbReference>
<dbReference type="SMR" id="A6US67"/>
<dbReference type="STRING" id="406327.Mevan_1445"/>
<dbReference type="GeneID" id="5324843"/>
<dbReference type="KEGG" id="mvn:Mevan_1445"/>
<dbReference type="eggNOG" id="arCOG00930">
    <property type="taxonomic scope" value="Archaea"/>
</dbReference>
<dbReference type="HOGENOM" id="CLU_009273_0_1_2"/>
<dbReference type="OrthoDB" id="6925at2157"/>
<dbReference type="UniPathway" id="UPA00344"/>
<dbReference type="Proteomes" id="UP000001107">
    <property type="component" value="Chromosome"/>
</dbReference>
<dbReference type="GO" id="GO:0051539">
    <property type="term" value="F:4 iron, 4 sulfur cluster binding"/>
    <property type="evidence" value="ECO:0007669"/>
    <property type="project" value="UniProtKB-UniRule"/>
</dbReference>
<dbReference type="GO" id="GO:0061799">
    <property type="term" value="F:cyclic pyranopterin monophosphate synthase activity"/>
    <property type="evidence" value="ECO:0007669"/>
    <property type="project" value="TreeGrafter"/>
</dbReference>
<dbReference type="GO" id="GO:0061798">
    <property type="term" value="F:GTP 3',8'-cyclase activity"/>
    <property type="evidence" value="ECO:0007669"/>
    <property type="project" value="UniProtKB-UniRule"/>
</dbReference>
<dbReference type="GO" id="GO:0005525">
    <property type="term" value="F:GTP binding"/>
    <property type="evidence" value="ECO:0007669"/>
    <property type="project" value="UniProtKB-UniRule"/>
</dbReference>
<dbReference type="GO" id="GO:0046872">
    <property type="term" value="F:metal ion binding"/>
    <property type="evidence" value="ECO:0007669"/>
    <property type="project" value="UniProtKB-KW"/>
</dbReference>
<dbReference type="GO" id="GO:1904047">
    <property type="term" value="F:S-adenosyl-L-methionine binding"/>
    <property type="evidence" value="ECO:0007669"/>
    <property type="project" value="UniProtKB-UniRule"/>
</dbReference>
<dbReference type="GO" id="GO:0006777">
    <property type="term" value="P:Mo-molybdopterin cofactor biosynthetic process"/>
    <property type="evidence" value="ECO:0007669"/>
    <property type="project" value="UniProtKB-UniRule"/>
</dbReference>
<dbReference type="CDD" id="cd01335">
    <property type="entry name" value="Radical_SAM"/>
    <property type="match status" value="1"/>
</dbReference>
<dbReference type="Gene3D" id="3.20.20.70">
    <property type="entry name" value="Aldolase class I"/>
    <property type="match status" value="1"/>
</dbReference>
<dbReference type="HAMAP" id="MF_01225_A">
    <property type="entry name" value="MoaA_A"/>
    <property type="match status" value="1"/>
</dbReference>
<dbReference type="InterPro" id="IPR013785">
    <property type="entry name" value="Aldolase_TIM"/>
</dbReference>
<dbReference type="InterPro" id="IPR006638">
    <property type="entry name" value="Elp3/MiaA/NifB-like_rSAM"/>
</dbReference>
<dbReference type="InterPro" id="IPR013485">
    <property type="entry name" value="MoaA_arc"/>
</dbReference>
<dbReference type="InterPro" id="IPR010505">
    <property type="entry name" value="MoaA_twitch"/>
</dbReference>
<dbReference type="InterPro" id="IPR050105">
    <property type="entry name" value="MoCo_biosynth_MoaA/MoaC"/>
</dbReference>
<dbReference type="InterPro" id="IPR007197">
    <property type="entry name" value="rSAM"/>
</dbReference>
<dbReference type="NCBIfam" id="TIGR02668">
    <property type="entry name" value="moaA_archaeal"/>
    <property type="match status" value="1"/>
</dbReference>
<dbReference type="NCBIfam" id="NF001199">
    <property type="entry name" value="PRK00164.2-1"/>
    <property type="match status" value="1"/>
</dbReference>
<dbReference type="PANTHER" id="PTHR22960:SF0">
    <property type="entry name" value="MOLYBDENUM COFACTOR BIOSYNTHESIS PROTEIN 1"/>
    <property type="match status" value="1"/>
</dbReference>
<dbReference type="PANTHER" id="PTHR22960">
    <property type="entry name" value="MOLYBDOPTERIN COFACTOR SYNTHESIS PROTEIN A"/>
    <property type="match status" value="1"/>
</dbReference>
<dbReference type="Pfam" id="PF13353">
    <property type="entry name" value="Fer4_12"/>
    <property type="match status" value="1"/>
</dbReference>
<dbReference type="Pfam" id="PF06463">
    <property type="entry name" value="Mob_synth_C"/>
    <property type="match status" value="1"/>
</dbReference>
<dbReference type="Pfam" id="PF04055">
    <property type="entry name" value="Radical_SAM"/>
    <property type="match status" value="1"/>
</dbReference>
<dbReference type="SFLD" id="SFLDG01383">
    <property type="entry name" value="cyclic_pyranopterin_phosphate"/>
    <property type="match status" value="1"/>
</dbReference>
<dbReference type="SFLD" id="SFLDS00029">
    <property type="entry name" value="Radical_SAM"/>
    <property type="match status" value="1"/>
</dbReference>
<dbReference type="SMART" id="SM00729">
    <property type="entry name" value="Elp3"/>
    <property type="match status" value="1"/>
</dbReference>
<dbReference type="SUPFAM" id="SSF102114">
    <property type="entry name" value="Radical SAM enzymes"/>
    <property type="match status" value="1"/>
</dbReference>
<dbReference type="PROSITE" id="PS51918">
    <property type="entry name" value="RADICAL_SAM"/>
    <property type="match status" value="1"/>
</dbReference>